<sequence length="236" mass="26909">MAPASSHRGHQWICDLVRGSCLLLLLVVSNLLLCQGVEDYAPYCKNQPGNCRIPLQSLFERATLVASNNYRLAREMFNEFNKQFGEGKNFTSKVINSCHTEFMTTPNNKEAAANTEDEALLRLVISLLHSWDEPLHQAVTELLHRNGASPDILARAKEIEDKTKVLLEGVEMIQKRVHPGEKKNEPYPVWSEKSSLTADDEDVRQTAFYRMFHCLHRDSSKISTYINLLKCRFTPC</sequence>
<dbReference type="EMBL" id="J02840">
    <property type="protein sequence ID" value="AAA30709.1"/>
    <property type="molecule type" value="mRNA"/>
</dbReference>
<dbReference type="EMBL" id="M33268">
    <property type="protein sequence ID" value="AAA30739.1"/>
    <property type="molecule type" value="mRNA"/>
</dbReference>
<dbReference type="EMBL" id="M65218">
    <property type="protein sequence ID" value="AAA30612.1"/>
    <property type="status" value="ALT_SEQ"/>
    <property type="molecule type" value="mRNA"/>
</dbReference>
<dbReference type="EMBL" id="M65219">
    <property type="protein sequence ID" value="AAA30613.1"/>
    <property type="status" value="ALT_SEQ"/>
    <property type="molecule type" value="mRNA"/>
</dbReference>
<dbReference type="EMBL" id="M65224">
    <property type="protein sequence ID" value="AAA30611.1"/>
    <property type="molecule type" value="Genomic_DNA"/>
</dbReference>
<dbReference type="EMBL" id="M65220">
    <property type="protein sequence ID" value="AAA30611.1"/>
    <property type="status" value="JOINED"/>
    <property type="molecule type" value="Genomic_DNA"/>
</dbReference>
<dbReference type="EMBL" id="M65221">
    <property type="protein sequence ID" value="AAA30611.1"/>
    <property type="status" value="JOINED"/>
    <property type="molecule type" value="Genomic_DNA"/>
</dbReference>
<dbReference type="EMBL" id="M65222">
    <property type="protein sequence ID" value="AAA30611.1"/>
    <property type="status" value="JOINED"/>
    <property type="molecule type" value="Genomic_DNA"/>
</dbReference>
<dbReference type="EMBL" id="M65223">
    <property type="protein sequence ID" value="AAA30611.1"/>
    <property type="status" value="JOINED"/>
    <property type="molecule type" value="Genomic_DNA"/>
</dbReference>
<dbReference type="PIR" id="A37930">
    <property type="entry name" value="A37930"/>
</dbReference>
<dbReference type="SMR" id="P09611"/>
<dbReference type="STRING" id="9913.ENSBTAP00000035394"/>
<dbReference type="GlyCosmos" id="P09611">
    <property type="glycosylation" value="1 site, No reported glycans"/>
</dbReference>
<dbReference type="GlyGen" id="P09611">
    <property type="glycosylation" value="1 site"/>
</dbReference>
<dbReference type="PaxDb" id="9913-ENSBTAP00000035394"/>
<dbReference type="eggNOG" id="ENOG502QYU3">
    <property type="taxonomic scope" value="Eukaryota"/>
</dbReference>
<dbReference type="InParanoid" id="P09611"/>
<dbReference type="Proteomes" id="UP000009136">
    <property type="component" value="Unplaced"/>
</dbReference>
<dbReference type="GO" id="GO:0005615">
    <property type="term" value="C:extracellular space"/>
    <property type="evidence" value="ECO:0000318"/>
    <property type="project" value="GO_Central"/>
</dbReference>
<dbReference type="GO" id="GO:0005179">
    <property type="term" value="F:hormone activity"/>
    <property type="evidence" value="ECO:0000318"/>
    <property type="project" value="GO_Central"/>
</dbReference>
<dbReference type="GO" id="GO:0005148">
    <property type="term" value="F:prolactin receptor binding"/>
    <property type="evidence" value="ECO:0000318"/>
    <property type="project" value="GO_Central"/>
</dbReference>
<dbReference type="GO" id="GO:0007166">
    <property type="term" value="P:cell surface receptor signaling pathway"/>
    <property type="evidence" value="ECO:0000318"/>
    <property type="project" value="GO_Central"/>
</dbReference>
<dbReference type="GO" id="GO:0007565">
    <property type="term" value="P:female pregnancy"/>
    <property type="evidence" value="ECO:0000318"/>
    <property type="project" value="GO_Central"/>
</dbReference>
<dbReference type="GO" id="GO:0030879">
    <property type="term" value="P:mammary gland development"/>
    <property type="evidence" value="ECO:0000318"/>
    <property type="project" value="GO_Central"/>
</dbReference>
<dbReference type="GO" id="GO:0009891">
    <property type="term" value="P:positive regulation of biosynthetic process"/>
    <property type="evidence" value="ECO:0007669"/>
    <property type="project" value="UniProtKB-ARBA"/>
</dbReference>
<dbReference type="GO" id="GO:1903489">
    <property type="term" value="P:positive regulation of lactation"/>
    <property type="evidence" value="ECO:0000318"/>
    <property type="project" value="GO_Central"/>
</dbReference>
<dbReference type="GO" id="GO:0046427">
    <property type="term" value="P:positive regulation of receptor signaling pathway via JAK-STAT"/>
    <property type="evidence" value="ECO:0000318"/>
    <property type="project" value="GO_Central"/>
</dbReference>
<dbReference type="GO" id="GO:0031667">
    <property type="term" value="P:response to nutrient levels"/>
    <property type="evidence" value="ECO:0000318"/>
    <property type="project" value="GO_Central"/>
</dbReference>
<dbReference type="CDD" id="cd10288">
    <property type="entry name" value="prolactin_like"/>
    <property type="match status" value="1"/>
</dbReference>
<dbReference type="Gene3D" id="1.20.1250.10">
    <property type="match status" value="1"/>
</dbReference>
<dbReference type="InterPro" id="IPR009079">
    <property type="entry name" value="4_helix_cytokine-like_core"/>
</dbReference>
<dbReference type="InterPro" id="IPR001400">
    <property type="entry name" value="Somatotropin/Prolactin"/>
</dbReference>
<dbReference type="InterPro" id="IPR018116">
    <property type="entry name" value="Somatotropin_CS"/>
</dbReference>
<dbReference type="PANTHER" id="PTHR11417:SF5">
    <property type="entry name" value="PROLACTIN"/>
    <property type="match status" value="1"/>
</dbReference>
<dbReference type="PANTHER" id="PTHR11417">
    <property type="entry name" value="SOMATOTROPIN,PROLACTIN"/>
    <property type="match status" value="1"/>
</dbReference>
<dbReference type="Pfam" id="PF00103">
    <property type="entry name" value="Hormone_1"/>
    <property type="match status" value="1"/>
</dbReference>
<dbReference type="PRINTS" id="PR00836">
    <property type="entry name" value="SOMATOTROPIN"/>
</dbReference>
<dbReference type="SUPFAM" id="SSF47266">
    <property type="entry name" value="4-helical cytokines"/>
    <property type="match status" value="1"/>
</dbReference>
<dbReference type="PROSITE" id="PS00266">
    <property type="entry name" value="SOMATOTROPIN_1"/>
    <property type="match status" value="1"/>
</dbReference>
<dbReference type="PROSITE" id="PS00338">
    <property type="entry name" value="SOMATOTROPIN_2"/>
    <property type="match status" value="1"/>
</dbReference>
<comment type="subcellular location">
    <subcellularLocation>
        <location>Secreted</location>
    </subcellularLocation>
</comment>
<comment type="similarity">
    <text evidence="2">Belongs to the somatotropin/prolactin family.</text>
</comment>
<accession>P09611</accession>
<evidence type="ECO:0000250" key="1"/>
<evidence type="ECO:0000305" key="2"/>
<proteinExistence type="evidence at protein level"/>
<keyword id="KW-0903">Direct protein sequencing</keyword>
<keyword id="KW-1015">Disulfide bond</keyword>
<keyword id="KW-0325">Glycoprotein</keyword>
<keyword id="KW-0372">Hormone</keyword>
<keyword id="KW-1185">Reference proteome</keyword>
<keyword id="KW-0964">Secreted</keyword>
<keyword id="KW-0732">Signal</keyword>
<protein>
    <recommendedName>
        <fullName>Chorionic somatomammotropin hormone 1</fullName>
    </recommendedName>
    <alternativeName>
        <fullName>BPLP-I</fullName>
    </alternativeName>
    <alternativeName>
        <fullName>Placental lactogen I</fullName>
    </alternativeName>
</protein>
<feature type="signal peptide">
    <location>
        <begin position="1"/>
        <end position="36"/>
    </location>
</feature>
<feature type="chain" id="PRO_0000032956" description="Chorionic somatomammotropin hormone 1">
    <location>
        <begin position="37"/>
        <end position="236"/>
    </location>
</feature>
<feature type="glycosylation site" description="N-linked (GlcNAc...) asparagine" evidence="2">
    <location>
        <position position="89"/>
    </location>
</feature>
<feature type="disulfide bond" evidence="1">
    <location>
        <begin position="98"/>
        <end position="214"/>
    </location>
</feature>
<feature type="disulfide bond" evidence="1">
    <location>
        <begin position="231"/>
        <end position="236"/>
    </location>
</feature>
<feature type="sequence conflict" description="In Ref. 2; AAA30709." evidence="2" ref="2">
    <original>V</original>
    <variation>A</variation>
    <location>
        <position position="37"/>
    </location>
</feature>
<feature type="sequence conflict" description="In Ref. 2; AAA30709 and 3; AAA30611." evidence="2" ref="2 3">
    <original>V</original>
    <variation>F</variation>
    <location>
        <position position="94"/>
    </location>
</feature>
<feature type="sequence conflict" description="In Ref. 3; AAA30613." evidence="2" ref="3">
    <original>V</original>
    <variation>M</variation>
    <location>
        <position position="170"/>
    </location>
</feature>
<gene>
    <name type="primary">CSH1</name>
    <name type="synonym">PL1</name>
</gene>
<organism>
    <name type="scientific">Bos taurus</name>
    <name type="common">Bovine</name>
    <dbReference type="NCBI Taxonomy" id="9913"/>
    <lineage>
        <taxon>Eukaryota</taxon>
        <taxon>Metazoa</taxon>
        <taxon>Chordata</taxon>
        <taxon>Craniata</taxon>
        <taxon>Vertebrata</taxon>
        <taxon>Euteleostomi</taxon>
        <taxon>Mammalia</taxon>
        <taxon>Eutheria</taxon>
        <taxon>Laurasiatheria</taxon>
        <taxon>Artiodactyla</taxon>
        <taxon>Ruminantia</taxon>
        <taxon>Pecora</taxon>
        <taxon>Bovidae</taxon>
        <taxon>Bovinae</taxon>
        <taxon>Bos</taxon>
    </lineage>
</organism>
<name>CSH1_BOVIN</name>
<reference key="1">
    <citation type="journal article" date="1990" name="J. Biol. Chem.">
        <title>Expression of new members of the prolactin growth hormone gene family in bovine placenta. Isolation and characterization of two prolactin-like cDNA clones.</title>
        <authorList>
            <person name="Yamakawa M."/>
            <person name="Tanaka M."/>
            <person name="Koyama M."/>
            <person name="Kagesato Y."/>
            <person name="Watahiki M."/>
            <person name="Yamamoto M."/>
            <person name="Nakashima K."/>
        </authorList>
    </citation>
    <scope>NUCLEOTIDE SEQUENCE [MRNA]</scope>
</reference>
<reference key="2">
    <citation type="journal article" date="1988" name="Biochemistry">
        <title>Bovine placental lactogen: molecular cloning and protein structure.</title>
        <authorList>
            <person name="Schuler L.A."/>
            <person name="Shimomura K."/>
            <person name="Kessler M.A."/>
            <person name="Zieler C.G."/>
            <person name="Bremel R.D."/>
        </authorList>
    </citation>
    <scope>NUCLEOTIDE SEQUENCE [MRNA]</scope>
    <scope>PARTIAL PROTEIN SEQUENCE</scope>
</reference>
<reference key="3">
    <citation type="journal article" date="1991" name="DNA Cell Biol.">
        <title>Structure of the bovine placental lactogen gene and alternative splicing of transcripts.</title>
        <authorList>
            <person name="Kessler M.A."/>
            <person name="Schuler L.A."/>
        </authorList>
    </citation>
    <scope>NUCLEOTIDE SEQUENCE [GENOMIC DNA / MRNA]</scope>
</reference>